<reference key="1">
    <citation type="submission" date="2005-08" db="EMBL/GenBank/DDBJ databases">
        <title>Complete sequence of Chlorobium chlorochromatii CaD3.</title>
        <authorList>
            <consortium name="US DOE Joint Genome Institute"/>
            <person name="Copeland A."/>
            <person name="Lucas S."/>
            <person name="Lapidus A."/>
            <person name="Barry K."/>
            <person name="Detter J.C."/>
            <person name="Glavina T."/>
            <person name="Hammon N."/>
            <person name="Israni S."/>
            <person name="Pitluck S."/>
            <person name="Bryant D."/>
            <person name="Schmutz J."/>
            <person name="Larimer F."/>
            <person name="Land M."/>
            <person name="Kyrpides N."/>
            <person name="Ivanova N."/>
            <person name="Richardson P."/>
        </authorList>
    </citation>
    <scope>NUCLEOTIDE SEQUENCE [LARGE SCALE GENOMIC DNA]</scope>
    <source>
        <strain>CaD3</strain>
    </source>
</reference>
<evidence type="ECO:0000255" key="1">
    <source>
        <dbReference type="HAMAP-Rule" id="MF_00171"/>
    </source>
</evidence>
<proteinExistence type="inferred from homology"/>
<name>TRUA_CHLCH</name>
<protein>
    <recommendedName>
        <fullName evidence="1">tRNA pseudouridine synthase A</fullName>
        <ecNumber evidence="1">5.4.99.12</ecNumber>
    </recommendedName>
    <alternativeName>
        <fullName evidence="1">tRNA pseudouridine(38-40) synthase</fullName>
    </alternativeName>
    <alternativeName>
        <fullName evidence="1">tRNA pseudouridylate synthase I</fullName>
    </alternativeName>
    <alternativeName>
        <fullName evidence="1">tRNA-uridine isomerase I</fullName>
    </alternativeName>
</protein>
<gene>
    <name evidence="1" type="primary">truA</name>
    <name type="ordered locus">Cag_1380</name>
</gene>
<comment type="function">
    <text evidence="1">Formation of pseudouridine at positions 38, 39 and 40 in the anticodon stem and loop of transfer RNAs.</text>
</comment>
<comment type="catalytic activity">
    <reaction evidence="1">
        <text>uridine(38/39/40) in tRNA = pseudouridine(38/39/40) in tRNA</text>
        <dbReference type="Rhea" id="RHEA:22376"/>
        <dbReference type="Rhea" id="RHEA-COMP:10085"/>
        <dbReference type="Rhea" id="RHEA-COMP:10087"/>
        <dbReference type="ChEBI" id="CHEBI:65314"/>
        <dbReference type="ChEBI" id="CHEBI:65315"/>
        <dbReference type="EC" id="5.4.99.12"/>
    </reaction>
</comment>
<comment type="subunit">
    <text evidence="1">Homodimer.</text>
</comment>
<comment type="similarity">
    <text evidence="1">Belongs to the tRNA pseudouridine synthase TruA family.</text>
</comment>
<feature type="chain" id="PRO_1000097728" description="tRNA pseudouridine synthase A">
    <location>
        <begin position="1"/>
        <end position="243"/>
    </location>
</feature>
<feature type="active site" description="Nucleophile" evidence="1">
    <location>
        <position position="53"/>
    </location>
</feature>
<feature type="binding site" evidence="1">
    <location>
        <position position="111"/>
    </location>
    <ligand>
        <name>substrate</name>
    </ligand>
</feature>
<accession>Q3AQT7</accession>
<organism>
    <name type="scientific">Chlorobium chlorochromatii (strain CaD3)</name>
    <dbReference type="NCBI Taxonomy" id="340177"/>
    <lineage>
        <taxon>Bacteria</taxon>
        <taxon>Pseudomonadati</taxon>
        <taxon>Chlorobiota</taxon>
        <taxon>Chlorobiia</taxon>
        <taxon>Chlorobiales</taxon>
        <taxon>Chlorobiaceae</taxon>
        <taxon>Chlorobium/Pelodictyon group</taxon>
        <taxon>Chlorobium</taxon>
    </lineage>
</organism>
<sequence>MRTIRLDIEYDGTDFAGWQRQSGTIPTVQGTIEKLLSQITQEEVLLNGAGRTDKGVHARQQVASCALHSSMELSRLAHSLNCLLPPTIRICNAVHVTDDFHARFSATERTYRYFVSETPSALCNRFTGCANALLDVGVMQQMAAMVVGEHDFTAFSREERDSPAKRCKVTSCRWHRLHGMVVLQISANRFLRSMVRYLVHAMLQGGKGRLAPTLFQDMVESGTSSYRMVAAPASGLFLWRIGY</sequence>
<dbReference type="EC" id="5.4.99.12" evidence="1"/>
<dbReference type="EMBL" id="CP000108">
    <property type="protein sequence ID" value="ABB28638.1"/>
    <property type="molecule type" value="Genomic_DNA"/>
</dbReference>
<dbReference type="SMR" id="Q3AQT7"/>
<dbReference type="STRING" id="340177.Cag_1380"/>
<dbReference type="KEGG" id="cch:Cag_1380"/>
<dbReference type="eggNOG" id="COG0101">
    <property type="taxonomic scope" value="Bacteria"/>
</dbReference>
<dbReference type="HOGENOM" id="CLU_014673_0_2_10"/>
<dbReference type="OrthoDB" id="9811823at2"/>
<dbReference type="GO" id="GO:0003723">
    <property type="term" value="F:RNA binding"/>
    <property type="evidence" value="ECO:0007669"/>
    <property type="project" value="InterPro"/>
</dbReference>
<dbReference type="GO" id="GO:0160147">
    <property type="term" value="F:tRNA pseudouridine(38-40) synthase activity"/>
    <property type="evidence" value="ECO:0007669"/>
    <property type="project" value="UniProtKB-EC"/>
</dbReference>
<dbReference type="GO" id="GO:0031119">
    <property type="term" value="P:tRNA pseudouridine synthesis"/>
    <property type="evidence" value="ECO:0007669"/>
    <property type="project" value="UniProtKB-UniRule"/>
</dbReference>
<dbReference type="CDD" id="cd02570">
    <property type="entry name" value="PseudoU_synth_EcTruA"/>
    <property type="match status" value="1"/>
</dbReference>
<dbReference type="FunFam" id="3.30.70.580:FF:000001">
    <property type="entry name" value="tRNA pseudouridine synthase A"/>
    <property type="match status" value="1"/>
</dbReference>
<dbReference type="Gene3D" id="3.30.70.660">
    <property type="entry name" value="Pseudouridine synthase I, catalytic domain, C-terminal subdomain"/>
    <property type="match status" value="1"/>
</dbReference>
<dbReference type="Gene3D" id="3.30.70.580">
    <property type="entry name" value="Pseudouridine synthase I, catalytic domain, N-terminal subdomain"/>
    <property type="match status" value="1"/>
</dbReference>
<dbReference type="HAMAP" id="MF_00171">
    <property type="entry name" value="TruA"/>
    <property type="match status" value="1"/>
</dbReference>
<dbReference type="InterPro" id="IPR020103">
    <property type="entry name" value="PsdUridine_synth_cat_dom_sf"/>
</dbReference>
<dbReference type="InterPro" id="IPR001406">
    <property type="entry name" value="PsdUridine_synth_TruA"/>
</dbReference>
<dbReference type="InterPro" id="IPR020097">
    <property type="entry name" value="PsdUridine_synth_TruA_a/b_dom"/>
</dbReference>
<dbReference type="InterPro" id="IPR020095">
    <property type="entry name" value="PsdUridine_synth_TruA_C"/>
</dbReference>
<dbReference type="InterPro" id="IPR020094">
    <property type="entry name" value="TruA/RsuA/RluB/E/F_N"/>
</dbReference>
<dbReference type="NCBIfam" id="TIGR00071">
    <property type="entry name" value="hisT_truA"/>
    <property type="match status" value="1"/>
</dbReference>
<dbReference type="PANTHER" id="PTHR11142">
    <property type="entry name" value="PSEUDOURIDYLATE SYNTHASE"/>
    <property type="match status" value="1"/>
</dbReference>
<dbReference type="PANTHER" id="PTHR11142:SF0">
    <property type="entry name" value="TRNA PSEUDOURIDINE SYNTHASE-LIKE 1"/>
    <property type="match status" value="1"/>
</dbReference>
<dbReference type="Pfam" id="PF01416">
    <property type="entry name" value="PseudoU_synth_1"/>
    <property type="match status" value="2"/>
</dbReference>
<dbReference type="PIRSF" id="PIRSF001430">
    <property type="entry name" value="tRNA_psdUrid_synth"/>
    <property type="match status" value="1"/>
</dbReference>
<dbReference type="SUPFAM" id="SSF55120">
    <property type="entry name" value="Pseudouridine synthase"/>
    <property type="match status" value="1"/>
</dbReference>
<keyword id="KW-0413">Isomerase</keyword>
<keyword id="KW-0819">tRNA processing</keyword>